<gene>
    <name evidence="1" type="primary">dxs</name>
    <name type="ordered locus">Dhaf_3488</name>
</gene>
<keyword id="KW-0414">Isoprene biosynthesis</keyword>
<keyword id="KW-0460">Magnesium</keyword>
<keyword id="KW-0479">Metal-binding</keyword>
<keyword id="KW-0784">Thiamine biosynthesis</keyword>
<keyword id="KW-0786">Thiamine pyrophosphate</keyword>
<keyword id="KW-0808">Transferase</keyword>
<organism>
    <name type="scientific">Desulfitobacterium hafniense (strain DSM 10664 / DCB-2)</name>
    <dbReference type="NCBI Taxonomy" id="272564"/>
    <lineage>
        <taxon>Bacteria</taxon>
        <taxon>Bacillati</taxon>
        <taxon>Bacillota</taxon>
        <taxon>Clostridia</taxon>
        <taxon>Eubacteriales</taxon>
        <taxon>Desulfitobacteriaceae</taxon>
        <taxon>Desulfitobacterium</taxon>
    </lineage>
</organism>
<comment type="function">
    <text evidence="1">Catalyzes the acyloin condensation reaction between C atoms 2 and 3 of pyruvate and glyceraldehyde 3-phosphate to yield 1-deoxy-D-xylulose-5-phosphate (DXP).</text>
</comment>
<comment type="catalytic activity">
    <reaction evidence="1">
        <text>D-glyceraldehyde 3-phosphate + pyruvate + H(+) = 1-deoxy-D-xylulose 5-phosphate + CO2</text>
        <dbReference type="Rhea" id="RHEA:12605"/>
        <dbReference type="ChEBI" id="CHEBI:15361"/>
        <dbReference type="ChEBI" id="CHEBI:15378"/>
        <dbReference type="ChEBI" id="CHEBI:16526"/>
        <dbReference type="ChEBI" id="CHEBI:57792"/>
        <dbReference type="ChEBI" id="CHEBI:59776"/>
        <dbReference type="EC" id="2.2.1.7"/>
    </reaction>
</comment>
<comment type="cofactor">
    <cofactor evidence="1">
        <name>Mg(2+)</name>
        <dbReference type="ChEBI" id="CHEBI:18420"/>
    </cofactor>
    <text evidence="1">Binds 1 Mg(2+) ion per subunit.</text>
</comment>
<comment type="cofactor">
    <cofactor evidence="1">
        <name>thiamine diphosphate</name>
        <dbReference type="ChEBI" id="CHEBI:58937"/>
    </cofactor>
    <text evidence="1">Binds 1 thiamine pyrophosphate per subunit.</text>
</comment>
<comment type="pathway">
    <text evidence="1">Metabolic intermediate biosynthesis; 1-deoxy-D-xylulose 5-phosphate biosynthesis; 1-deoxy-D-xylulose 5-phosphate from D-glyceraldehyde 3-phosphate and pyruvate: step 1/1.</text>
</comment>
<comment type="subunit">
    <text evidence="1">Homodimer.</text>
</comment>
<comment type="similarity">
    <text evidence="1">Belongs to the transketolase family. DXPS subfamily.</text>
</comment>
<protein>
    <recommendedName>
        <fullName evidence="1">1-deoxy-D-xylulose-5-phosphate synthase</fullName>
        <ecNumber evidence="1">2.2.1.7</ecNumber>
    </recommendedName>
    <alternativeName>
        <fullName evidence="1">1-deoxyxylulose-5-phosphate synthase</fullName>
        <shortName evidence="1">DXP synthase</shortName>
        <shortName evidence="1">DXPS</shortName>
    </alternativeName>
</protein>
<dbReference type="EC" id="2.2.1.7" evidence="1"/>
<dbReference type="EMBL" id="CP001336">
    <property type="protein sequence ID" value="ACL21506.1"/>
    <property type="molecule type" value="Genomic_DNA"/>
</dbReference>
<dbReference type="RefSeq" id="WP_005810949.1">
    <property type="nucleotide sequence ID" value="NC_011830.1"/>
</dbReference>
<dbReference type="SMR" id="B8FQ45"/>
<dbReference type="KEGG" id="dhd:Dhaf_3488"/>
<dbReference type="HOGENOM" id="CLU_009227_1_4_9"/>
<dbReference type="UniPathway" id="UPA00064">
    <property type="reaction ID" value="UER00091"/>
</dbReference>
<dbReference type="Proteomes" id="UP000007726">
    <property type="component" value="Chromosome"/>
</dbReference>
<dbReference type="GO" id="GO:0005829">
    <property type="term" value="C:cytosol"/>
    <property type="evidence" value="ECO:0007669"/>
    <property type="project" value="TreeGrafter"/>
</dbReference>
<dbReference type="GO" id="GO:0008661">
    <property type="term" value="F:1-deoxy-D-xylulose-5-phosphate synthase activity"/>
    <property type="evidence" value="ECO:0007669"/>
    <property type="project" value="UniProtKB-UniRule"/>
</dbReference>
<dbReference type="GO" id="GO:0000287">
    <property type="term" value="F:magnesium ion binding"/>
    <property type="evidence" value="ECO:0007669"/>
    <property type="project" value="UniProtKB-UniRule"/>
</dbReference>
<dbReference type="GO" id="GO:0030976">
    <property type="term" value="F:thiamine pyrophosphate binding"/>
    <property type="evidence" value="ECO:0007669"/>
    <property type="project" value="UniProtKB-UniRule"/>
</dbReference>
<dbReference type="GO" id="GO:0052865">
    <property type="term" value="P:1-deoxy-D-xylulose 5-phosphate biosynthetic process"/>
    <property type="evidence" value="ECO:0007669"/>
    <property type="project" value="UniProtKB-UniPathway"/>
</dbReference>
<dbReference type="GO" id="GO:0019288">
    <property type="term" value="P:isopentenyl diphosphate biosynthetic process, methylerythritol 4-phosphate pathway"/>
    <property type="evidence" value="ECO:0007669"/>
    <property type="project" value="TreeGrafter"/>
</dbReference>
<dbReference type="GO" id="GO:0016114">
    <property type="term" value="P:terpenoid biosynthetic process"/>
    <property type="evidence" value="ECO:0007669"/>
    <property type="project" value="UniProtKB-UniRule"/>
</dbReference>
<dbReference type="GO" id="GO:0009228">
    <property type="term" value="P:thiamine biosynthetic process"/>
    <property type="evidence" value="ECO:0007669"/>
    <property type="project" value="UniProtKB-UniRule"/>
</dbReference>
<dbReference type="CDD" id="cd02007">
    <property type="entry name" value="TPP_DXS"/>
    <property type="match status" value="1"/>
</dbReference>
<dbReference type="CDD" id="cd07033">
    <property type="entry name" value="TPP_PYR_DXS_TK_like"/>
    <property type="match status" value="1"/>
</dbReference>
<dbReference type="FunFam" id="3.40.50.970:FF:000005">
    <property type="entry name" value="1-deoxy-D-xylulose-5-phosphate synthase"/>
    <property type="match status" value="1"/>
</dbReference>
<dbReference type="Gene3D" id="3.40.50.920">
    <property type="match status" value="1"/>
</dbReference>
<dbReference type="Gene3D" id="3.40.50.970">
    <property type="match status" value="2"/>
</dbReference>
<dbReference type="HAMAP" id="MF_00315">
    <property type="entry name" value="DXP_synth"/>
    <property type="match status" value="1"/>
</dbReference>
<dbReference type="InterPro" id="IPR005477">
    <property type="entry name" value="Dxylulose-5-P_synthase"/>
</dbReference>
<dbReference type="InterPro" id="IPR029061">
    <property type="entry name" value="THDP-binding"/>
</dbReference>
<dbReference type="InterPro" id="IPR009014">
    <property type="entry name" value="Transketo_C/PFOR_II"/>
</dbReference>
<dbReference type="InterPro" id="IPR005475">
    <property type="entry name" value="Transketolase-like_Pyr-bd"/>
</dbReference>
<dbReference type="InterPro" id="IPR020826">
    <property type="entry name" value="Transketolase_BS"/>
</dbReference>
<dbReference type="InterPro" id="IPR033248">
    <property type="entry name" value="Transketolase_C"/>
</dbReference>
<dbReference type="InterPro" id="IPR049557">
    <property type="entry name" value="Transketolase_CS"/>
</dbReference>
<dbReference type="NCBIfam" id="TIGR00204">
    <property type="entry name" value="dxs"/>
    <property type="match status" value="1"/>
</dbReference>
<dbReference type="NCBIfam" id="NF003933">
    <property type="entry name" value="PRK05444.2-2"/>
    <property type="match status" value="1"/>
</dbReference>
<dbReference type="PANTHER" id="PTHR43322">
    <property type="entry name" value="1-D-DEOXYXYLULOSE 5-PHOSPHATE SYNTHASE-RELATED"/>
    <property type="match status" value="1"/>
</dbReference>
<dbReference type="PANTHER" id="PTHR43322:SF5">
    <property type="entry name" value="1-DEOXY-D-XYLULOSE-5-PHOSPHATE SYNTHASE, CHLOROPLASTIC"/>
    <property type="match status" value="1"/>
</dbReference>
<dbReference type="Pfam" id="PF13292">
    <property type="entry name" value="DXP_synthase_N"/>
    <property type="match status" value="1"/>
</dbReference>
<dbReference type="Pfam" id="PF02779">
    <property type="entry name" value="Transket_pyr"/>
    <property type="match status" value="1"/>
</dbReference>
<dbReference type="Pfam" id="PF02780">
    <property type="entry name" value="Transketolase_C"/>
    <property type="match status" value="1"/>
</dbReference>
<dbReference type="SMART" id="SM00861">
    <property type="entry name" value="Transket_pyr"/>
    <property type="match status" value="1"/>
</dbReference>
<dbReference type="SUPFAM" id="SSF52518">
    <property type="entry name" value="Thiamin diphosphate-binding fold (THDP-binding)"/>
    <property type="match status" value="2"/>
</dbReference>
<dbReference type="SUPFAM" id="SSF52922">
    <property type="entry name" value="TK C-terminal domain-like"/>
    <property type="match status" value="1"/>
</dbReference>
<dbReference type="PROSITE" id="PS00801">
    <property type="entry name" value="TRANSKETOLASE_1"/>
    <property type="match status" value="1"/>
</dbReference>
<dbReference type="PROSITE" id="PS00802">
    <property type="entry name" value="TRANSKETOLASE_2"/>
    <property type="match status" value="1"/>
</dbReference>
<evidence type="ECO:0000255" key="1">
    <source>
        <dbReference type="HAMAP-Rule" id="MF_00315"/>
    </source>
</evidence>
<accession>B8FQ45</accession>
<name>DXS_DESHD</name>
<sequence>MGILAKIEQPRDLKGLTYPELEQLAQEIRAEMIDVVSANGGHLAPNLGVVELTLALHRVFDSPKDKIIWDVGHQSYVHKLVTGRQKEFKSLRLYKGLSGFPKRCESPHDCFETGHSSTSISAAVGFAKARDLRKEKNQVVAVIGDGAMTGGMAFEALNHAGHTKTNMIVVLNDNEMAIAQNVGAMSSYLNRLRTDPRYDRSKDEIENLLKRIPGIGSKMAKAAEKAKDSLKYLLVPGLLFEEMGFTYLGPVNGHDQIALEQVFEQAKMVKEPVLVHVLTQKGRGYEPSEKNPALFHGVGPFNKVTGEVIKKPAPPTYTQVFGEALCELAEKDPRITAITAAMPSGTGLNLFAQKFPDRFFDVGIAEQHAVTFSAALAFGGMKPVVSIYSTFYQRAYDQVLHDVCLPHANVVMAIDRAGVVGDDGPTHHGVFDISFLRVIPNLVFMAPKDENELRHMLYTSLQLDGPVALRYPRSVGQGVELTEELRELPVGKAEILQEGKDITLIGVGPMVYTCLAAAVELRHRGVEATVINLRYINPLDRESILRYARMTKRIITVEDHMLAGGMGSAVMEVLGDEGLTDVVVERLGYDEYVDQGAISLLHQGYGLSVVGILKAAERLKVLQRIEGRSSV</sequence>
<feature type="chain" id="PRO_1000132930" description="1-deoxy-D-xylulose-5-phosphate synthase">
    <location>
        <begin position="1"/>
        <end position="631"/>
    </location>
</feature>
<feature type="binding site" evidence="1">
    <location>
        <position position="73"/>
    </location>
    <ligand>
        <name>thiamine diphosphate</name>
        <dbReference type="ChEBI" id="CHEBI:58937"/>
    </ligand>
</feature>
<feature type="binding site" evidence="1">
    <location>
        <begin position="114"/>
        <end position="116"/>
    </location>
    <ligand>
        <name>thiamine diphosphate</name>
        <dbReference type="ChEBI" id="CHEBI:58937"/>
    </ligand>
</feature>
<feature type="binding site" evidence="1">
    <location>
        <position position="145"/>
    </location>
    <ligand>
        <name>Mg(2+)</name>
        <dbReference type="ChEBI" id="CHEBI:18420"/>
    </ligand>
</feature>
<feature type="binding site" evidence="1">
    <location>
        <begin position="146"/>
        <end position="147"/>
    </location>
    <ligand>
        <name>thiamine diphosphate</name>
        <dbReference type="ChEBI" id="CHEBI:58937"/>
    </ligand>
</feature>
<feature type="binding site" evidence="1">
    <location>
        <position position="174"/>
    </location>
    <ligand>
        <name>Mg(2+)</name>
        <dbReference type="ChEBI" id="CHEBI:18420"/>
    </ligand>
</feature>
<feature type="binding site" evidence="1">
    <location>
        <position position="174"/>
    </location>
    <ligand>
        <name>thiamine diphosphate</name>
        <dbReference type="ChEBI" id="CHEBI:58937"/>
    </ligand>
</feature>
<feature type="binding site" evidence="1">
    <location>
        <position position="285"/>
    </location>
    <ligand>
        <name>thiamine diphosphate</name>
        <dbReference type="ChEBI" id="CHEBI:58937"/>
    </ligand>
</feature>
<feature type="binding site" evidence="1">
    <location>
        <position position="366"/>
    </location>
    <ligand>
        <name>thiamine diphosphate</name>
        <dbReference type="ChEBI" id="CHEBI:58937"/>
    </ligand>
</feature>
<reference key="1">
    <citation type="journal article" date="2012" name="BMC Microbiol.">
        <title>Genome sequence of Desulfitobacterium hafniense DCB-2, a Gram-positive anaerobe capable of dehalogenation and metal reduction.</title>
        <authorList>
            <person name="Kim S.H."/>
            <person name="Harzman C."/>
            <person name="Davis J.K."/>
            <person name="Hutcheson R."/>
            <person name="Broderick J.B."/>
            <person name="Marsh T.L."/>
            <person name="Tiedje J.M."/>
        </authorList>
    </citation>
    <scope>NUCLEOTIDE SEQUENCE [LARGE SCALE GENOMIC DNA]</scope>
    <source>
        <strain>DSM 10664 / DCB-2</strain>
    </source>
</reference>
<proteinExistence type="inferred from homology"/>